<keyword id="KW-0378">Hydrolase</keyword>
<keyword id="KW-0479">Metal-binding</keyword>
<keyword id="KW-0862">Zinc</keyword>
<protein>
    <recommendedName>
        <fullName evidence="1">Hydroxyacylglutathione hydrolase</fullName>
        <ecNumber evidence="1">3.1.2.6</ecNumber>
    </recommendedName>
    <alternativeName>
        <fullName evidence="1">Glyoxalase II</fullName>
        <shortName evidence="1">Glx II</shortName>
    </alternativeName>
</protein>
<feature type="chain" id="PRO_0000309656" description="Hydroxyacylglutathione hydrolase">
    <location>
        <begin position="1"/>
        <end position="269"/>
    </location>
</feature>
<feature type="binding site" evidence="1">
    <location>
        <position position="56"/>
    </location>
    <ligand>
        <name>Zn(2+)</name>
        <dbReference type="ChEBI" id="CHEBI:29105"/>
        <label>1</label>
    </ligand>
</feature>
<feature type="binding site" evidence="1">
    <location>
        <position position="58"/>
    </location>
    <ligand>
        <name>Zn(2+)</name>
        <dbReference type="ChEBI" id="CHEBI:29105"/>
        <label>1</label>
    </ligand>
</feature>
<feature type="binding site" evidence="1">
    <location>
        <position position="60"/>
    </location>
    <ligand>
        <name>Zn(2+)</name>
        <dbReference type="ChEBI" id="CHEBI:29105"/>
        <label>2</label>
    </ligand>
</feature>
<feature type="binding site" evidence="1">
    <location>
        <position position="61"/>
    </location>
    <ligand>
        <name>Zn(2+)</name>
        <dbReference type="ChEBI" id="CHEBI:29105"/>
        <label>2</label>
    </ligand>
</feature>
<feature type="binding site" evidence="1">
    <location>
        <position position="115"/>
    </location>
    <ligand>
        <name>Zn(2+)</name>
        <dbReference type="ChEBI" id="CHEBI:29105"/>
        <label>1</label>
    </ligand>
</feature>
<feature type="binding site" evidence="1">
    <location>
        <position position="137"/>
    </location>
    <ligand>
        <name>Zn(2+)</name>
        <dbReference type="ChEBI" id="CHEBI:29105"/>
        <label>1</label>
    </ligand>
</feature>
<feature type="binding site" evidence="1">
    <location>
        <position position="137"/>
    </location>
    <ligand>
        <name>Zn(2+)</name>
        <dbReference type="ChEBI" id="CHEBI:29105"/>
        <label>2</label>
    </ligand>
</feature>
<feature type="binding site" evidence="1">
    <location>
        <position position="177"/>
    </location>
    <ligand>
        <name>Zn(2+)</name>
        <dbReference type="ChEBI" id="CHEBI:29105"/>
        <label>2</label>
    </ligand>
</feature>
<evidence type="ECO:0000255" key="1">
    <source>
        <dbReference type="HAMAP-Rule" id="MF_01374"/>
    </source>
</evidence>
<reference key="1">
    <citation type="journal article" date="2006" name="Proc. Natl. Acad. Sci. U.S.A.">
        <title>Genome reduction in Leptospira borgpetersenii reflects limited transmission potential.</title>
        <authorList>
            <person name="Bulach D.M."/>
            <person name="Zuerner R.L."/>
            <person name="Wilson P."/>
            <person name="Seemann T."/>
            <person name="McGrath A."/>
            <person name="Cullen P.A."/>
            <person name="Davis J."/>
            <person name="Johnson M."/>
            <person name="Kuczek E."/>
            <person name="Alt D.P."/>
            <person name="Peterson-Burch B."/>
            <person name="Coppel R.L."/>
            <person name="Rood J.I."/>
            <person name="Davies J.K."/>
            <person name="Adler B."/>
        </authorList>
    </citation>
    <scope>NUCLEOTIDE SEQUENCE [LARGE SCALE GENOMIC DNA]</scope>
    <source>
        <strain>JB197</strain>
    </source>
</reference>
<dbReference type="EC" id="3.1.2.6" evidence="1"/>
<dbReference type="EMBL" id="CP000350">
    <property type="protein sequence ID" value="ABJ76414.1"/>
    <property type="molecule type" value="Genomic_DNA"/>
</dbReference>
<dbReference type="SMR" id="Q04RQ6"/>
<dbReference type="KEGG" id="lbj:LBJ_1894"/>
<dbReference type="HOGENOM" id="CLU_030571_4_1_12"/>
<dbReference type="UniPathway" id="UPA00619">
    <property type="reaction ID" value="UER00676"/>
</dbReference>
<dbReference type="Proteomes" id="UP000000656">
    <property type="component" value="Chromosome 1"/>
</dbReference>
<dbReference type="GO" id="GO:0004416">
    <property type="term" value="F:hydroxyacylglutathione hydrolase activity"/>
    <property type="evidence" value="ECO:0007669"/>
    <property type="project" value="UniProtKB-UniRule"/>
</dbReference>
<dbReference type="GO" id="GO:0046872">
    <property type="term" value="F:metal ion binding"/>
    <property type="evidence" value="ECO:0007669"/>
    <property type="project" value="UniProtKB-KW"/>
</dbReference>
<dbReference type="GO" id="GO:0019243">
    <property type="term" value="P:methylglyoxal catabolic process to D-lactate via S-lactoyl-glutathione"/>
    <property type="evidence" value="ECO:0007669"/>
    <property type="project" value="InterPro"/>
</dbReference>
<dbReference type="CDD" id="cd07723">
    <property type="entry name" value="hydroxyacylglutathione_hydrolase_MBL-fold"/>
    <property type="match status" value="1"/>
</dbReference>
<dbReference type="Gene3D" id="3.60.15.10">
    <property type="entry name" value="Ribonuclease Z/Hydroxyacylglutathione hydrolase-like"/>
    <property type="match status" value="1"/>
</dbReference>
<dbReference type="HAMAP" id="MF_01374">
    <property type="entry name" value="Glyoxalase_2"/>
    <property type="match status" value="1"/>
</dbReference>
<dbReference type="InterPro" id="IPR035680">
    <property type="entry name" value="Clx_II_MBL"/>
</dbReference>
<dbReference type="InterPro" id="IPR050110">
    <property type="entry name" value="Glyoxalase_II_hydrolase"/>
</dbReference>
<dbReference type="InterPro" id="IPR032282">
    <property type="entry name" value="HAGH_C"/>
</dbReference>
<dbReference type="InterPro" id="IPR017782">
    <property type="entry name" value="Hydroxyacylglutathione_Hdrlase"/>
</dbReference>
<dbReference type="InterPro" id="IPR001279">
    <property type="entry name" value="Metallo-B-lactamas"/>
</dbReference>
<dbReference type="InterPro" id="IPR036866">
    <property type="entry name" value="RibonucZ/Hydroxyglut_hydro"/>
</dbReference>
<dbReference type="PANTHER" id="PTHR43705">
    <property type="entry name" value="HYDROXYACYLGLUTATHIONE HYDROLASE"/>
    <property type="match status" value="1"/>
</dbReference>
<dbReference type="PANTHER" id="PTHR43705:SF1">
    <property type="entry name" value="HYDROXYACYLGLUTATHIONE HYDROLASE GLOB"/>
    <property type="match status" value="1"/>
</dbReference>
<dbReference type="Pfam" id="PF16123">
    <property type="entry name" value="HAGH_C"/>
    <property type="match status" value="1"/>
</dbReference>
<dbReference type="Pfam" id="PF00753">
    <property type="entry name" value="Lactamase_B"/>
    <property type="match status" value="1"/>
</dbReference>
<dbReference type="SMART" id="SM00849">
    <property type="entry name" value="Lactamase_B"/>
    <property type="match status" value="1"/>
</dbReference>
<dbReference type="SUPFAM" id="SSF56281">
    <property type="entry name" value="Metallo-hydrolase/oxidoreductase"/>
    <property type="match status" value="1"/>
</dbReference>
<name>GLO2_LEPBJ</name>
<sequence>MEVFRIYTNSPLRNFTYILRNSETSETLSIDPYDSEQIEKFLDSKGWTLDFLLNTHEHEDHTSGNTGLVQRYGCTVYSHPEGIGKIPHATHPLKKGDFLLRSSKEYLEILDTPGHTFCHVCLLLVENQKPKAIFTGDTIFNAGVGNCHHGGDPEVLAKTILEQFYPLEEEILLYPGHDYLETNLKFTLSLDPSNQDAIRTLEECSRLSKNVEFLTTDLRKERKINTFFQCDKPSLELRKNVSKKIPFKQLLDNDPTSFFISLRSLRDQW</sequence>
<comment type="function">
    <text evidence="1">Thiolesterase that catalyzes the hydrolysis of S-D-lactoyl-glutathione to form glutathione and D-lactic acid.</text>
</comment>
<comment type="catalytic activity">
    <reaction evidence="1">
        <text>an S-(2-hydroxyacyl)glutathione + H2O = a 2-hydroxy carboxylate + glutathione + H(+)</text>
        <dbReference type="Rhea" id="RHEA:21864"/>
        <dbReference type="ChEBI" id="CHEBI:15377"/>
        <dbReference type="ChEBI" id="CHEBI:15378"/>
        <dbReference type="ChEBI" id="CHEBI:57925"/>
        <dbReference type="ChEBI" id="CHEBI:58896"/>
        <dbReference type="ChEBI" id="CHEBI:71261"/>
        <dbReference type="EC" id="3.1.2.6"/>
    </reaction>
</comment>
<comment type="cofactor">
    <cofactor evidence="1">
        <name>Zn(2+)</name>
        <dbReference type="ChEBI" id="CHEBI:29105"/>
    </cofactor>
    <text evidence="1">Binds 2 Zn(2+) ions per subunit.</text>
</comment>
<comment type="pathway">
    <text evidence="1">Secondary metabolite metabolism; methylglyoxal degradation; (R)-lactate from methylglyoxal: step 2/2.</text>
</comment>
<comment type="subunit">
    <text evidence="1">Monomer.</text>
</comment>
<comment type="similarity">
    <text evidence="1">Belongs to the metallo-beta-lactamase superfamily. Glyoxalase II family.</text>
</comment>
<organism>
    <name type="scientific">Leptospira borgpetersenii serovar Hardjo-bovis (strain JB197)</name>
    <dbReference type="NCBI Taxonomy" id="355277"/>
    <lineage>
        <taxon>Bacteria</taxon>
        <taxon>Pseudomonadati</taxon>
        <taxon>Spirochaetota</taxon>
        <taxon>Spirochaetia</taxon>
        <taxon>Leptospirales</taxon>
        <taxon>Leptospiraceae</taxon>
        <taxon>Leptospira</taxon>
    </lineage>
</organism>
<gene>
    <name evidence="1" type="primary">gloB</name>
    <name type="ordered locus">LBJ_1894</name>
</gene>
<proteinExistence type="inferred from homology"/>
<accession>Q04RQ6</accession>